<evidence type="ECO:0000255" key="1">
    <source>
        <dbReference type="HAMAP-Rule" id="MF_00268"/>
    </source>
</evidence>
<reference key="1">
    <citation type="journal article" date="2007" name="J. Bacteriol.">
        <title>Genome of the opportunistic pathogen Streptococcus sanguinis.</title>
        <authorList>
            <person name="Xu P."/>
            <person name="Alves J.M."/>
            <person name="Kitten T."/>
            <person name="Brown A."/>
            <person name="Chen Z."/>
            <person name="Ozaki L.S."/>
            <person name="Manque P."/>
            <person name="Ge X."/>
            <person name="Serrano M.G."/>
            <person name="Puiu D."/>
            <person name="Hendricks S."/>
            <person name="Wang Y."/>
            <person name="Chaplin M.D."/>
            <person name="Akan D."/>
            <person name="Paik S."/>
            <person name="Peterson D.L."/>
            <person name="Macrina F.L."/>
            <person name="Buck G.A."/>
        </authorList>
    </citation>
    <scope>NUCLEOTIDE SEQUENCE [LARGE SCALE GENOMIC DNA]</scope>
    <source>
        <strain>SK36</strain>
    </source>
</reference>
<gene>
    <name evidence="1" type="primary">recA</name>
    <name type="ordered locus">SSA_2245</name>
</gene>
<name>RECA_STRSV</name>
<protein>
    <recommendedName>
        <fullName evidence="1">Protein RecA</fullName>
    </recommendedName>
    <alternativeName>
        <fullName evidence="1">Recombinase A</fullName>
    </alternativeName>
</protein>
<feature type="chain" id="PRO_1000048017" description="Protein RecA">
    <location>
        <begin position="1"/>
        <end position="382"/>
    </location>
</feature>
<feature type="binding site" evidence="1">
    <location>
        <begin position="79"/>
        <end position="86"/>
    </location>
    <ligand>
        <name>ATP</name>
        <dbReference type="ChEBI" id="CHEBI:30616"/>
    </ligand>
</feature>
<accession>A3CR02</accession>
<proteinExistence type="inferred from homology"/>
<sequence length="382" mass="41120">MAKKQKKLDEISKKFGDERQKALDNALKNIEKDFGKGAIMRLGERAEQKVQVMSSGSLALDIALGAGGYPKGRIIEIYGPESSGKTTVALHAVAQAQKEGGIAAFIDAEHALDPSYAAALGVNIDELLLSQPDSGEQGLEIAGKLIDSGAVDLVVVDSVAALVPRAEIDGDIGDSHVGLQARMMSQAMRKLSASINKTKTIAIFINQLREKVGVMFGNPETTPGGRALKFYASVRLDVRGNTQIKGTGDEKDTNVGKETKIKVVKNKVAPPFKEAFVEIMYGEGISKTGELIKIATDLDIIKKAGAWYSYNDEKIGQGSENAKKYLADHPEVFGEIDRQVRVRYGLIDGDDMAEAVGNKAESPVETLEEVTLDLDDAIEIEE</sequence>
<organism>
    <name type="scientific">Streptococcus sanguinis (strain SK36)</name>
    <dbReference type="NCBI Taxonomy" id="388919"/>
    <lineage>
        <taxon>Bacteria</taxon>
        <taxon>Bacillati</taxon>
        <taxon>Bacillota</taxon>
        <taxon>Bacilli</taxon>
        <taxon>Lactobacillales</taxon>
        <taxon>Streptococcaceae</taxon>
        <taxon>Streptococcus</taxon>
    </lineage>
</organism>
<keyword id="KW-0067">ATP-binding</keyword>
<keyword id="KW-0963">Cytoplasm</keyword>
<keyword id="KW-0227">DNA damage</keyword>
<keyword id="KW-0233">DNA recombination</keyword>
<keyword id="KW-0234">DNA repair</keyword>
<keyword id="KW-0238">DNA-binding</keyword>
<keyword id="KW-0547">Nucleotide-binding</keyword>
<keyword id="KW-1185">Reference proteome</keyword>
<keyword id="KW-0742">SOS response</keyword>
<comment type="function">
    <text evidence="1">Can catalyze the hydrolysis of ATP in the presence of single-stranded DNA, the ATP-dependent uptake of single-stranded DNA by duplex DNA, and the ATP-dependent hybridization of homologous single-stranded DNAs. It interacts with LexA causing its activation and leading to its autocatalytic cleavage.</text>
</comment>
<comment type="subcellular location">
    <subcellularLocation>
        <location evidence="1">Cytoplasm</location>
    </subcellularLocation>
</comment>
<comment type="similarity">
    <text evidence="1">Belongs to the RecA family.</text>
</comment>
<dbReference type="EMBL" id="CP000387">
    <property type="protein sequence ID" value="ABN45607.1"/>
    <property type="molecule type" value="Genomic_DNA"/>
</dbReference>
<dbReference type="RefSeq" id="WP_011837638.1">
    <property type="nucleotide sequence ID" value="NC_009009.1"/>
</dbReference>
<dbReference type="RefSeq" id="YP_001036157.1">
    <property type="nucleotide sequence ID" value="NC_009009.1"/>
</dbReference>
<dbReference type="SMR" id="A3CR02"/>
<dbReference type="STRING" id="388919.SSA_2245"/>
<dbReference type="KEGG" id="ssa:SSA_2245"/>
<dbReference type="PATRIC" id="fig|388919.9.peg.2127"/>
<dbReference type="eggNOG" id="COG0468">
    <property type="taxonomic scope" value="Bacteria"/>
</dbReference>
<dbReference type="HOGENOM" id="CLU_040469_3_2_9"/>
<dbReference type="OrthoDB" id="9776733at2"/>
<dbReference type="Proteomes" id="UP000002148">
    <property type="component" value="Chromosome"/>
</dbReference>
<dbReference type="GO" id="GO:0005829">
    <property type="term" value="C:cytosol"/>
    <property type="evidence" value="ECO:0007669"/>
    <property type="project" value="TreeGrafter"/>
</dbReference>
<dbReference type="GO" id="GO:0005524">
    <property type="term" value="F:ATP binding"/>
    <property type="evidence" value="ECO:0007669"/>
    <property type="project" value="UniProtKB-UniRule"/>
</dbReference>
<dbReference type="GO" id="GO:0016887">
    <property type="term" value="F:ATP hydrolysis activity"/>
    <property type="evidence" value="ECO:0007669"/>
    <property type="project" value="InterPro"/>
</dbReference>
<dbReference type="GO" id="GO:0140664">
    <property type="term" value="F:ATP-dependent DNA damage sensor activity"/>
    <property type="evidence" value="ECO:0007669"/>
    <property type="project" value="InterPro"/>
</dbReference>
<dbReference type="GO" id="GO:0003684">
    <property type="term" value="F:damaged DNA binding"/>
    <property type="evidence" value="ECO:0007669"/>
    <property type="project" value="UniProtKB-UniRule"/>
</dbReference>
<dbReference type="GO" id="GO:0003697">
    <property type="term" value="F:single-stranded DNA binding"/>
    <property type="evidence" value="ECO:0007669"/>
    <property type="project" value="UniProtKB-UniRule"/>
</dbReference>
<dbReference type="GO" id="GO:0006310">
    <property type="term" value="P:DNA recombination"/>
    <property type="evidence" value="ECO:0007669"/>
    <property type="project" value="UniProtKB-UniRule"/>
</dbReference>
<dbReference type="GO" id="GO:0006281">
    <property type="term" value="P:DNA repair"/>
    <property type="evidence" value="ECO:0007669"/>
    <property type="project" value="UniProtKB-UniRule"/>
</dbReference>
<dbReference type="GO" id="GO:0009432">
    <property type="term" value="P:SOS response"/>
    <property type="evidence" value="ECO:0007669"/>
    <property type="project" value="UniProtKB-UniRule"/>
</dbReference>
<dbReference type="CDD" id="cd00983">
    <property type="entry name" value="RecA"/>
    <property type="match status" value="1"/>
</dbReference>
<dbReference type="FunFam" id="3.40.50.300:FF:000087">
    <property type="entry name" value="Recombinase RecA"/>
    <property type="match status" value="1"/>
</dbReference>
<dbReference type="Gene3D" id="3.40.50.300">
    <property type="entry name" value="P-loop containing nucleotide triphosphate hydrolases"/>
    <property type="match status" value="1"/>
</dbReference>
<dbReference type="HAMAP" id="MF_00268">
    <property type="entry name" value="RecA"/>
    <property type="match status" value="1"/>
</dbReference>
<dbReference type="InterPro" id="IPR003593">
    <property type="entry name" value="AAA+_ATPase"/>
</dbReference>
<dbReference type="InterPro" id="IPR013765">
    <property type="entry name" value="DNA_recomb/repair_RecA"/>
</dbReference>
<dbReference type="InterPro" id="IPR020584">
    <property type="entry name" value="DNA_recomb/repair_RecA_CS"/>
</dbReference>
<dbReference type="InterPro" id="IPR027417">
    <property type="entry name" value="P-loop_NTPase"/>
</dbReference>
<dbReference type="InterPro" id="IPR049261">
    <property type="entry name" value="RecA-like_C"/>
</dbReference>
<dbReference type="InterPro" id="IPR049428">
    <property type="entry name" value="RecA-like_N"/>
</dbReference>
<dbReference type="InterPro" id="IPR020588">
    <property type="entry name" value="RecA_ATP-bd"/>
</dbReference>
<dbReference type="InterPro" id="IPR023400">
    <property type="entry name" value="RecA_C_sf"/>
</dbReference>
<dbReference type="InterPro" id="IPR020587">
    <property type="entry name" value="RecA_monomer-monomer_interface"/>
</dbReference>
<dbReference type="NCBIfam" id="TIGR02012">
    <property type="entry name" value="tigrfam_recA"/>
    <property type="match status" value="1"/>
</dbReference>
<dbReference type="PANTHER" id="PTHR45900:SF1">
    <property type="entry name" value="MITOCHONDRIAL DNA REPAIR PROTEIN RECA HOMOLOG-RELATED"/>
    <property type="match status" value="1"/>
</dbReference>
<dbReference type="PANTHER" id="PTHR45900">
    <property type="entry name" value="RECA"/>
    <property type="match status" value="1"/>
</dbReference>
<dbReference type="Pfam" id="PF00154">
    <property type="entry name" value="RecA"/>
    <property type="match status" value="1"/>
</dbReference>
<dbReference type="Pfam" id="PF21096">
    <property type="entry name" value="RecA_C"/>
    <property type="match status" value="1"/>
</dbReference>
<dbReference type="PRINTS" id="PR00142">
    <property type="entry name" value="RECA"/>
</dbReference>
<dbReference type="SMART" id="SM00382">
    <property type="entry name" value="AAA"/>
    <property type="match status" value="1"/>
</dbReference>
<dbReference type="SUPFAM" id="SSF52540">
    <property type="entry name" value="P-loop containing nucleoside triphosphate hydrolases"/>
    <property type="match status" value="1"/>
</dbReference>
<dbReference type="SUPFAM" id="SSF54752">
    <property type="entry name" value="RecA protein, C-terminal domain"/>
    <property type="match status" value="1"/>
</dbReference>
<dbReference type="PROSITE" id="PS00321">
    <property type="entry name" value="RECA_1"/>
    <property type="match status" value="1"/>
</dbReference>
<dbReference type="PROSITE" id="PS50162">
    <property type="entry name" value="RECA_2"/>
    <property type="match status" value="1"/>
</dbReference>
<dbReference type="PROSITE" id="PS50163">
    <property type="entry name" value="RECA_3"/>
    <property type="match status" value="1"/>
</dbReference>